<keyword id="KW-0413">Isomerase</keyword>
<keyword id="KW-0819">tRNA processing</keyword>
<organism>
    <name type="scientific">Acinetobacter baumannii (strain ACICU)</name>
    <dbReference type="NCBI Taxonomy" id="405416"/>
    <lineage>
        <taxon>Bacteria</taxon>
        <taxon>Pseudomonadati</taxon>
        <taxon>Pseudomonadota</taxon>
        <taxon>Gammaproteobacteria</taxon>
        <taxon>Moraxellales</taxon>
        <taxon>Moraxellaceae</taxon>
        <taxon>Acinetobacter</taxon>
        <taxon>Acinetobacter calcoaceticus/baumannii complex</taxon>
    </lineage>
</organism>
<dbReference type="EC" id="5.4.99.12" evidence="1"/>
<dbReference type="EMBL" id="CP000863">
    <property type="protein sequence ID" value="ACC55745.1"/>
    <property type="molecule type" value="Genomic_DNA"/>
</dbReference>
<dbReference type="RefSeq" id="WP_001190096.1">
    <property type="nucleotide sequence ID" value="NZ_CP031380.1"/>
</dbReference>
<dbReference type="SMR" id="B2I367"/>
<dbReference type="KEGG" id="abc:ACICU_00433"/>
<dbReference type="HOGENOM" id="CLU_014673_0_2_6"/>
<dbReference type="Proteomes" id="UP000008839">
    <property type="component" value="Chromosome"/>
</dbReference>
<dbReference type="GO" id="GO:0003723">
    <property type="term" value="F:RNA binding"/>
    <property type="evidence" value="ECO:0007669"/>
    <property type="project" value="InterPro"/>
</dbReference>
<dbReference type="GO" id="GO:0160147">
    <property type="term" value="F:tRNA pseudouridine(38-40) synthase activity"/>
    <property type="evidence" value="ECO:0007669"/>
    <property type="project" value="UniProtKB-EC"/>
</dbReference>
<dbReference type="GO" id="GO:0031119">
    <property type="term" value="P:tRNA pseudouridine synthesis"/>
    <property type="evidence" value="ECO:0007669"/>
    <property type="project" value="UniProtKB-UniRule"/>
</dbReference>
<dbReference type="CDD" id="cd02570">
    <property type="entry name" value="PseudoU_synth_EcTruA"/>
    <property type="match status" value="1"/>
</dbReference>
<dbReference type="FunFam" id="3.30.70.580:FF:000001">
    <property type="entry name" value="tRNA pseudouridine synthase A"/>
    <property type="match status" value="1"/>
</dbReference>
<dbReference type="Gene3D" id="3.30.70.660">
    <property type="entry name" value="Pseudouridine synthase I, catalytic domain, C-terminal subdomain"/>
    <property type="match status" value="1"/>
</dbReference>
<dbReference type="Gene3D" id="3.30.70.580">
    <property type="entry name" value="Pseudouridine synthase I, catalytic domain, N-terminal subdomain"/>
    <property type="match status" value="1"/>
</dbReference>
<dbReference type="HAMAP" id="MF_00171">
    <property type="entry name" value="TruA"/>
    <property type="match status" value="1"/>
</dbReference>
<dbReference type="InterPro" id="IPR020103">
    <property type="entry name" value="PsdUridine_synth_cat_dom_sf"/>
</dbReference>
<dbReference type="InterPro" id="IPR001406">
    <property type="entry name" value="PsdUridine_synth_TruA"/>
</dbReference>
<dbReference type="InterPro" id="IPR020097">
    <property type="entry name" value="PsdUridine_synth_TruA_a/b_dom"/>
</dbReference>
<dbReference type="InterPro" id="IPR020095">
    <property type="entry name" value="PsdUridine_synth_TruA_C"/>
</dbReference>
<dbReference type="InterPro" id="IPR020094">
    <property type="entry name" value="TruA/RsuA/RluB/E/F_N"/>
</dbReference>
<dbReference type="NCBIfam" id="TIGR00071">
    <property type="entry name" value="hisT_truA"/>
    <property type="match status" value="1"/>
</dbReference>
<dbReference type="PANTHER" id="PTHR11142">
    <property type="entry name" value="PSEUDOURIDYLATE SYNTHASE"/>
    <property type="match status" value="1"/>
</dbReference>
<dbReference type="PANTHER" id="PTHR11142:SF0">
    <property type="entry name" value="TRNA PSEUDOURIDINE SYNTHASE-LIKE 1"/>
    <property type="match status" value="1"/>
</dbReference>
<dbReference type="Pfam" id="PF01416">
    <property type="entry name" value="PseudoU_synth_1"/>
    <property type="match status" value="2"/>
</dbReference>
<dbReference type="PIRSF" id="PIRSF001430">
    <property type="entry name" value="tRNA_psdUrid_synth"/>
    <property type="match status" value="1"/>
</dbReference>
<dbReference type="SUPFAM" id="SSF55120">
    <property type="entry name" value="Pseudouridine synthase"/>
    <property type="match status" value="1"/>
</dbReference>
<accession>B2I367</accession>
<comment type="function">
    <text evidence="1">Formation of pseudouridine at positions 38, 39 and 40 in the anticodon stem and loop of transfer RNAs.</text>
</comment>
<comment type="catalytic activity">
    <reaction evidence="1">
        <text>uridine(38/39/40) in tRNA = pseudouridine(38/39/40) in tRNA</text>
        <dbReference type="Rhea" id="RHEA:22376"/>
        <dbReference type="Rhea" id="RHEA-COMP:10085"/>
        <dbReference type="Rhea" id="RHEA-COMP:10087"/>
        <dbReference type="ChEBI" id="CHEBI:65314"/>
        <dbReference type="ChEBI" id="CHEBI:65315"/>
        <dbReference type="EC" id="5.4.99.12"/>
    </reaction>
</comment>
<comment type="subunit">
    <text evidence="1">Homodimer.</text>
</comment>
<comment type="similarity">
    <text evidence="1">Belongs to the tRNA pseudouridine synthase TruA family.</text>
</comment>
<protein>
    <recommendedName>
        <fullName evidence="1">tRNA pseudouridine synthase A</fullName>
        <ecNumber evidence="1">5.4.99.12</ecNumber>
    </recommendedName>
    <alternativeName>
        <fullName evidence="1">tRNA pseudouridine(38-40) synthase</fullName>
    </alternativeName>
    <alternativeName>
        <fullName evidence="1">tRNA pseudouridylate synthase I</fullName>
    </alternativeName>
    <alternativeName>
        <fullName evidence="1">tRNA-uridine isomerase I</fullName>
    </alternativeName>
</protein>
<reference key="1">
    <citation type="journal article" date="2008" name="Antimicrob. Agents Chemother.">
        <title>Whole-genome pyrosequencing of an epidemic multidrug-resistant Acinetobacter baumannii strain belonging to the European clone II group.</title>
        <authorList>
            <person name="Iacono M."/>
            <person name="Villa L."/>
            <person name="Fortini D."/>
            <person name="Bordoni R."/>
            <person name="Imperi F."/>
            <person name="Bonnal R.J."/>
            <person name="Sicheritz-Ponten T."/>
            <person name="De Bellis G."/>
            <person name="Visca P."/>
            <person name="Cassone A."/>
            <person name="Carattoli A."/>
        </authorList>
    </citation>
    <scope>NUCLEOTIDE SEQUENCE [LARGE SCALE GENOMIC DNA]</scope>
    <source>
        <strain>ACICU</strain>
    </source>
</reference>
<evidence type="ECO:0000255" key="1">
    <source>
        <dbReference type="HAMAP-Rule" id="MF_00171"/>
    </source>
</evidence>
<feature type="chain" id="PRO_1000097709" description="tRNA pseudouridine synthase A">
    <location>
        <begin position="1"/>
        <end position="265"/>
    </location>
</feature>
<feature type="active site" description="Nucleophile" evidence="1">
    <location>
        <position position="53"/>
    </location>
</feature>
<feature type="binding site" evidence="1">
    <location>
        <position position="111"/>
    </location>
    <ligand>
        <name>substrate</name>
    </ligand>
</feature>
<gene>
    <name evidence="1" type="primary">truA</name>
    <name type="ordered locus">ACICU_00433</name>
</gene>
<sequence>MQRYAVGIEFSGIQYRGWQTQQPGVASVQETIELVLSKIADEPITLHGAGRTDAGVHATNMVAHFDTNAIRPERGWIMGANSQLPKDISIQWIKQMDEEFHARFKATARRYRYVVYNAPHRPALLHKQVTHIYQKLDVQKMIKAASKFEGTHNFETFRAAACQSNQPVRHVKHCRLFEHGRYLVLDIQADGFLHHMVRNIMGCLLEIGQGMYEIDHIDAMFAAEDRKAAGITAPPDGLYFIQCYYPEQFDLPQPPLGPHWLNLPE</sequence>
<proteinExistence type="inferred from homology"/>
<name>TRUA_ACIBC</name>